<accession>B1X833</accession>
<reference key="1">
    <citation type="journal article" date="2008" name="J. Bacteriol.">
        <title>The complete genome sequence of Escherichia coli DH10B: insights into the biology of a laboratory workhorse.</title>
        <authorList>
            <person name="Durfee T."/>
            <person name="Nelson R."/>
            <person name="Baldwin S."/>
            <person name="Plunkett G. III"/>
            <person name="Burland V."/>
            <person name="Mau B."/>
            <person name="Petrosino J.F."/>
            <person name="Qin X."/>
            <person name="Muzny D.M."/>
            <person name="Ayele M."/>
            <person name="Gibbs R.A."/>
            <person name="Csorgo B."/>
            <person name="Posfai G."/>
            <person name="Weinstock G.M."/>
            <person name="Blattner F.R."/>
        </authorList>
    </citation>
    <scope>NUCLEOTIDE SEQUENCE [LARGE SCALE GENOMIC DNA]</scope>
    <source>
        <strain>K12 / DH10B</strain>
    </source>
</reference>
<comment type="function">
    <text evidence="1">Catalyzes the attachment of serine to tRNA(Ser). Is also able to aminoacylate tRNA(Sec) with serine, to form the misacylated tRNA L-seryl-tRNA(Sec), which will be further converted into selenocysteinyl-tRNA(Sec).</text>
</comment>
<comment type="catalytic activity">
    <reaction evidence="1">
        <text>tRNA(Ser) + L-serine + ATP = L-seryl-tRNA(Ser) + AMP + diphosphate + H(+)</text>
        <dbReference type="Rhea" id="RHEA:12292"/>
        <dbReference type="Rhea" id="RHEA-COMP:9669"/>
        <dbReference type="Rhea" id="RHEA-COMP:9703"/>
        <dbReference type="ChEBI" id="CHEBI:15378"/>
        <dbReference type="ChEBI" id="CHEBI:30616"/>
        <dbReference type="ChEBI" id="CHEBI:33019"/>
        <dbReference type="ChEBI" id="CHEBI:33384"/>
        <dbReference type="ChEBI" id="CHEBI:78442"/>
        <dbReference type="ChEBI" id="CHEBI:78533"/>
        <dbReference type="ChEBI" id="CHEBI:456215"/>
        <dbReference type="EC" id="6.1.1.11"/>
    </reaction>
</comment>
<comment type="catalytic activity">
    <reaction evidence="1">
        <text>tRNA(Sec) + L-serine + ATP = L-seryl-tRNA(Sec) + AMP + diphosphate + H(+)</text>
        <dbReference type="Rhea" id="RHEA:42580"/>
        <dbReference type="Rhea" id="RHEA-COMP:9742"/>
        <dbReference type="Rhea" id="RHEA-COMP:10128"/>
        <dbReference type="ChEBI" id="CHEBI:15378"/>
        <dbReference type="ChEBI" id="CHEBI:30616"/>
        <dbReference type="ChEBI" id="CHEBI:33019"/>
        <dbReference type="ChEBI" id="CHEBI:33384"/>
        <dbReference type="ChEBI" id="CHEBI:78442"/>
        <dbReference type="ChEBI" id="CHEBI:78533"/>
        <dbReference type="ChEBI" id="CHEBI:456215"/>
        <dbReference type="EC" id="6.1.1.11"/>
    </reaction>
</comment>
<comment type="pathway">
    <text evidence="1">Aminoacyl-tRNA biosynthesis; selenocysteinyl-tRNA(Sec) biosynthesis; L-seryl-tRNA(Sec) from L-serine and tRNA(Sec): step 1/1.</text>
</comment>
<comment type="subunit">
    <text evidence="1">Homodimer. The tRNA molecule binds across the dimer.</text>
</comment>
<comment type="subcellular location">
    <subcellularLocation>
        <location evidence="1">Cytoplasm</location>
    </subcellularLocation>
</comment>
<comment type="domain">
    <text evidence="1">Consists of two distinct domains, a catalytic core and a N-terminal extension that is involved in tRNA binding.</text>
</comment>
<comment type="similarity">
    <text evidence="1">Belongs to the class-II aminoacyl-tRNA synthetase family. Type-1 seryl-tRNA synthetase subfamily.</text>
</comment>
<proteinExistence type="inferred from homology"/>
<feature type="chain" id="PRO_1000098064" description="Serine--tRNA ligase">
    <location>
        <begin position="1"/>
        <end position="430"/>
    </location>
</feature>
<feature type="binding site" evidence="1">
    <location>
        <begin position="237"/>
        <end position="239"/>
    </location>
    <ligand>
        <name>L-serine</name>
        <dbReference type="ChEBI" id="CHEBI:33384"/>
    </ligand>
</feature>
<feature type="binding site" evidence="1">
    <location>
        <begin position="268"/>
        <end position="270"/>
    </location>
    <ligand>
        <name>ATP</name>
        <dbReference type="ChEBI" id="CHEBI:30616"/>
    </ligand>
</feature>
<feature type="binding site" evidence="1">
    <location>
        <position position="291"/>
    </location>
    <ligand>
        <name>L-serine</name>
        <dbReference type="ChEBI" id="CHEBI:33384"/>
    </ligand>
</feature>
<feature type="binding site" evidence="1">
    <location>
        <begin position="355"/>
        <end position="358"/>
    </location>
    <ligand>
        <name>ATP</name>
        <dbReference type="ChEBI" id="CHEBI:30616"/>
    </ligand>
</feature>
<feature type="binding site" evidence="1">
    <location>
        <position position="391"/>
    </location>
    <ligand>
        <name>L-serine</name>
        <dbReference type="ChEBI" id="CHEBI:33384"/>
    </ligand>
</feature>
<protein>
    <recommendedName>
        <fullName evidence="1">Serine--tRNA ligase</fullName>
        <ecNumber evidence="1">6.1.1.11</ecNumber>
    </recommendedName>
    <alternativeName>
        <fullName evidence="1">Seryl-tRNA synthetase</fullName>
        <shortName evidence="1">SerRS</shortName>
    </alternativeName>
    <alternativeName>
        <fullName evidence="1">Seryl-tRNA(Ser/Sec) synthetase</fullName>
    </alternativeName>
</protein>
<name>SYS_ECODH</name>
<evidence type="ECO:0000255" key="1">
    <source>
        <dbReference type="HAMAP-Rule" id="MF_00176"/>
    </source>
</evidence>
<keyword id="KW-0030">Aminoacyl-tRNA synthetase</keyword>
<keyword id="KW-0067">ATP-binding</keyword>
<keyword id="KW-0963">Cytoplasm</keyword>
<keyword id="KW-0436">Ligase</keyword>
<keyword id="KW-0547">Nucleotide-binding</keyword>
<keyword id="KW-0648">Protein biosynthesis</keyword>
<gene>
    <name evidence="1" type="primary">serS</name>
    <name type="ordered locus">ECDH10B_0963</name>
</gene>
<organism>
    <name type="scientific">Escherichia coli (strain K12 / DH10B)</name>
    <dbReference type="NCBI Taxonomy" id="316385"/>
    <lineage>
        <taxon>Bacteria</taxon>
        <taxon>Pseudomonadati</taxon>
        <taxon>Pseudomonadota</taxon>
        <taxon>Gammaproteobacteria</taxon>
        <taxon>Enterobacterales</taxon>
        <taxon>Enterobacteriaceae</taxon>
        <taxon>Escherichia</taxon>
    </lineage>
</organism>
<dbReference type="EC" id="6.1.1.11" evidence="1"/>
<dbReference type="EMBL" id="CP000948">
    <property type="protein sequence ID" value="ACB02093.1"/>
    <property type="molecule type" value="Genomic_DNA"/>
</dbReference>
<dbReference type="RefSeq" id="WP_000886683.1">
    <property type="nucleotide sequence ID" value="NC_010473.1"/>
</dbReference>
<dbReference type="SMR" id="B1X833"/>
<dbReference type="GeneID" id="93776527"/>
<dbReference type="KEGG" id="ecd:ECDH10B_0963"/>
<dbReference type="HOGENOM" id="CLU_023797_1_1_6"/>
<dbReference type="UniPathway" id="UPA00906">
    <property type="reaction ID" value="UER00895"/>
</dbReference>
<dbReference type="GO" id="GO:0005737">
    <property type="term" value="C:cytoplasm"/>
    <property type="evidence" value="ECO:0007669"/>
    <property type="project" value="UniProtKB-SubCell"/>
</dbReference>
<dbReference type="GO" id="GO:0005524">
    <property type="term" value="F:ATP binding"/>
    <property type="evidence" value="ECO:0007669"/>
    <property type="project" value="UniProtKB-UniRule"/>
</dbReference>
<dbReference type="GO" id="GO:0004828">
    <property type="term" value="F:serine-tRNA ligase activity"/>
    <property type="evidence" value="ECO:0007669"/>
    <property type="project" value="UniProtKB-UniRule"/>
</dbReference>
<dbReference type="GO" id="GO:0016260">
    <property type="term" value="P:selenocysteine biosynthetic process"/>
    <property type="evidence" value="ECO:0007669"/>
    <property type="project" value="UniProtKB-UniRule"/>
</dbReference>
<dbReference type="GO" id="GO:0006434">
    <property type="term" value="P:seryl-tRNA aminoacylation"/>
    <property type="evidence" value="ECO:0007669"/>
    <property type="project" value="UniProtKB-UniRule"/>
</dbReference>
<dbReference type="CDD" id="cd00770">
    <property type="entry name" value="SerRS_core"/>
    <property type="match status" value="1"/>
</dbReference>
<dbReference type="FunFam" id="1.10.287.40:FF:000001">
    <property type="entry name" value="Serine--tRNA ligase"/>
    <property type="match status" value="1"/>
</dbReference>
<dbReference type="FunFam" id="3.30.930.10:FF:000018">
    <property type="entry name" value="Serine--tRNA ligase"/>
    <property type="match status" value="1"/>
</dbReference>
<dbReference type="Gene3D" id="3.30.930.10">
    <property type="entry name" value="Bira Bifunctional Protein, Domain 2"/>
    <property type="match status" value="1"/>
</dbReference>
<dbReference type="Gene3D" id="1.10.287.40">
    <property type="entry name" value="Serine-tRNA synthetase, tRNA binding domain"/>
    <property type="match status" value="1"/>
</dbReference>
<dbReference type="HAMAP" id="MF_00176">
    <property type="entry name" value="Ser_tRNA_synth_type1"/>
    <property type="match status" value="1"/>
</dbReference>
<dbReference type="InterPro" id="IPR002314">
    <property type="entry name" value="aa-tRNA-synt_IIb"/>
</dbReference>
<dbReference type="InterPro" id="IPR006195">
    <property type="entry name" value="aa-tRNA-synth_II"/>
</dbReference>
<dbReference type="InterPro" id="IPR045864">
    <property type="entry name" value="aa-tRNA-synth_II/BPL/LPL"/>
</dbReference>
<dbReference type="InterPro" id="IPR002317">
    <property type="entry name" value="Ser-tRNA-ligase_type_1"/>
</dbReference>
<dbReference type="InterPro" id="IPR015866">
    <property type="entry name" value="Ser-tRNA-synth_1_N"/>
</dbReference>
<dbReference type="InterPro" id="IPR042103">
    <property type="entry name" value="SerRS_1_N_sf"/>
</dbReference>
<dbReference type="InterPro" id="IPR033729">
    <property type="entry name" value="SerRS_core"/>
</dbReference>
<dbReference type="InterPro" id="IPR010978">
    <property type="entry name" value="tRNA-bd_arm"/>
</dbReference>
<dbReference type="NCBIfam" id="TIGR00414">
    <property type="entry name" value="serS"/>
    <property type="match status" value="1"/>
</dbReference>
<dbReference type="PANTHER" id="PTHR43697:SF1">
    <property type="entry name" value="SERINE--TRNA LIGASE"/>
    <property type="match status" value="1"/>
</dbReference>
<dbReference type="PANTHER" id="PTHR43697">
    <property type="entry name" value="SERYL-TRNA SYNTHETASE"/>
    <property type="match status" value="1"/>
</dbReference>
<dbReference type="Pfam" id="PF02403">
    <property type="entry name" value="Seryl_tRNA_N"/>
    <property type="match status" value="1"/>
</dbReference>
<dbReference type="Pfam" id="PF00587">
    <property type="entry name" value="tRNA-synt_2b"/>
    <property type="match status" value="1"/>
</dbReference>
<dbReference type="PIRSF" id="PIRSF001529">
    <property type="entry name" value="Ser-tRNA-synth_IIa"/>
    <property type="match status" value="1"/>
</dbReference>
<dbReference type="PRINTS" id="PR00981">
    <property type="entry name" value="TRNASYNTHSER"/>
</dbReference>
<dbReference type="SUPFAM" id="SSF55681">
    <property type="entry name" value="Class II aaRS and biotin synthetases"/>
    <property type="match status" value="1"/>
</dbReference>
<dbReference type="SUPFAM" id="SSF46589">
    <property type="entry name" value="tRNA-binding arm"/>
    <property type="match status" value="1"/>
</dbReference>
<dbReference type="PROSITE" id="PS50862">
    <property type="entry name" value="AA_TRNA_LIGASE_II"/>
    <property type="match status" value="1"/>
</dbReference>
<sequence length="430" mass="48414">MLDPNLLRNEPDAVAEKLARRGFKLDVDKLGALEERRKVLQVKTENLQAERNSRSKSIGQAKARGEDIEPLRLEVNKLGEELDAAKAELDALQAEIRDIALTIPNLPADEVPVGKDENDNVEVSRWGTPREFDFEVRDHVTLGEMHSGLDFAAAVKLTGSRFVVMKGQIARMHRALSQFMLDLHTEQHGYSENYVPYLVNQDTLYGTGQLPKFAGDLFHTRPLEEEADTSNYALIPTAEVPLTNLVRGEIIDEDDLPIKMTAHTPCFRSEAGSYGRDTRGLIRMHQFDKVEMVQIVRPEDSMAALEEMTGHAEKVLQLLGLPYRKIILCTGDMGFGACKTYDLEVWIPAQNTYREISSCSNVWDFQARRMQARCRSKSDKKTRLVHTLNGSGLAVGRTLVAVMENYQQADGRIEVPEVLRPYMNGLEYIG</sequence>